<evidence type="ECO:0000250" key="1"/>
<evidence type="ECO:0000255" key="2"/>
<evidence type="ECO:0000305" key="3"/>
<keyword id="KW-1015">Disulfide bond</keyword>
<keyword id="KW-0872">Ion channel impairing toxin</keyword>
<keyword id="KW-0960">Knottin</keyword>
<keyword id="KW-0964">Secreted</keyword>
<keyword id="KW-0732">Signal</keyword>
<keyword id="KW-0800">Toxin</keyword>
<dbReference type="EMBL" id="EU233914">
    <property type="protein sequence ID" value="ABY71733.1"/>
    <property type="molecule type" value="mRNA"/>
</dbReference>
<dbReference type="SMR" id="B1P1I3"/>
<dbReference type="ArachnoServer" id="AS000862">
    <property type="toxin name" value="U31-theraphotoxin-Cg1a"/>
</dbReference>
<dbReference type="GO" id="GO:0005576">
    <property type="term" value="C:extracellular region"/>
    <property type="evidence" value="ECO:0007669"/>
    <property type="project" value="UniProtKB-SubCell"/>
</dbReference>
<dbReference type="GO" id="GO:0099106">
    <property type="term" value="F:ion channel regulator activity"/>
    <property type="evidence" value="ECO:0007669"/>
    <property type="project" value="UniProtKB-KW"/>
</dbReference>
<dbReference type="GO" id="GO:0090729">
    <property type="term" value="F:toxin activity"/>
    <property type="evidence" value="ECO:0007669"/>
    <property type="project" value="UniProtKB-KW"/>
</dbReference>
<reference key="1">
    <citation type="journal article" date="2008" name="Cell. Mol. Life Sci.">
        <title>Molecular diversity and evolution of cystine knot toxins of the tarantula Chilobrachys jingzhao.</title>
        <authorList>
            <person name="Chen J."/>
            <person name="Deng M."/>
            <person name="He Q."/>
            <person name="Meng E."/>
            <person name="Jiang L."/>
            <person name="Liao Z."/>
            <person name="Rong M."/>
            <person name="Liang S."/>
        </authorList>
    </citation>
    <scope>NUCLEOTIDE SEQUENCE [LARGE SCALE MRNA]</scope>
    <source>
        <tissue>Venom gland</tissue>
    </source>
</reference>
<protein>
    <recommendedName>
        <fullName>U31-theraphotoxin-Cg1a</fullName>
        <shortName>U31-TRTX-Cg1a</shortName>
    </recommendedName>
    <alternativeName>
        <fullName>Jingzhaotoxin-64</fullName>
        <shortName>JZTX-64</shortName>
    </alternativeName>
</protein>
<proteinExistence type="evidence at transcript level"/>
<comment type="function">
    <text>Probable ion channel inhibitor.</text>
</comment>
<comment type="subcellular location">
    <subcellularLocation>
        <location evidence="1">Secreted</location>
    </subcellularLocation>
</comment>
<comment type="tissue specificity">
    <text>Expressed by the venom gland.</text>
</comment>
<comment type="domain">
    <text evidence="3">The presence of a 'disulfide through disulfide knot' structurally defines this protein as a knottin.</text>
</comment>
<comment type="similarity">
    <text evidence="3">Belongs to the neurotoxin 03 (Tx2) family. 02 subfamily.</text>
</comment>
<feature type="signal peptide" evidence="2">
    <location>
        <begin position="1"/>
        <end position="18"/>
    </location>
</feature>
<feature type="propeptide" id="PRO_0000398542" evidence="1">
    <location>
        <begin position="19"/>
        <end position="51"/>
    </location>
</feature>
<feature type="peptide" id="PRO_0000398543" description="U31-theraphotoxin-Cg1a">
    <location>
        <begin position="52"/>
        <end position="115"/>
    </location>
</feature>
<feature type="disulfide bond" evidence="3">
    <location>
        <begin position="52"/>
        <end position="67"/>
    </location>
</feature>
<feature type="disulfide bond" evidence="3">
    <location>
        <begin position="60"/>
        <end position="73"/>
    </location>
</feature>
<feature type="disulfide bond" evidence="3">
    <location>
        <begin position="64"/>
        <end position="113"/>
    </location>
</feature>
<feature type="disulfide bond" evidence="3">
    <location>
        <begin position="66"/>
        <end position="86"/>
    </location>
</feature>
<accession>B1P1I3</accession>
<sequence length="115" mass="12726">MKLCVIIIASLMVASVSGRLRKIKGTELDKKMLLEKLGHGMDIRFEETPRACSKKAGEKCKSNCDCCGYSTLCGYITEGKEVKYQCMSKTSNNKILNTVGLGVNAIENMLSFCFR</sequence>
<name>TX32F_CHIGU</name>
<organism>
    <name type="scientific">Chilobrachys guangxiensis</name>
    <name type="common">Chinese earth tiger tarantula</name>
    <name type="synonym">Chilobrachys jingzhao</name>
    <dbReference type="NCBI Taxonomy" id="278060"/>
    <lineage>
        <taxon>Eukaryota</taxon>
        <taxon>Metazoa</taxon>
        <taxon>Ecdysozoa</taxon>
        <taxon>Arthropoda</taxon>
        <taxon>Chelicerata</taxon>
        <taxon>Arachnida</taxon>
        <taxon>Araneae</taxon>
        <taxon>Mygalomorphae</taxon>
        <taxon>Theraphosidae</taxon>
        <taxon>Chilobrachys</taxon>
    </lineage>
</organism>